<gene>
    <name evidence="1" type="primary">rho</name>
    <name type="ordered locus">Alvin_0604</name>
</gene>
<comment type="function">
    <text evidence="1">Facilitates transcription termination by a mechanism that involves Rho binding to the nascent RNA, activation of Rho's RNA-dependent ATPase activity, and release of the mRNA from the DNA template.</text>
</comment>
<comment type="subunit">
    <text evidence="1">Homohexamer. The homohexamer assembles into an open ring structure.</text>
</comment>
<comment type="similarity">
    <text evidence="1">Belongs to the Rho family.</text>
</comment>
<protein>
    <recommendedName>
        <fullName evidence="1">Transcription termination factor Rho</fullName>
        <ecNumber evidence="1">3.6.4.-</ecNumber>
    </recommendedName>
    <alternativeName>
        <fullName evidence="1">ATP-dependent helicase Rho</fullName>
    </alternativeName>
</protein>
<sequence>MNLTELKKMPVPNLVALAQSMDIEGVGRSRKQDLIFAILKAQAKKGEDIYGDGVLEILSDGFGFLRSADASYLAGPDDIYVSPSQIRRFALRTGDTISGKIRPPKDGERYFALLKVNDINFDRPENAKSKILFENFTPLFAQKRLTLEIGNGSTEDITARTIDLVAPIGKGQRGLIVSPPKAGKTMMLQNIAQSIGHNHPDCYLIVLLIDERPEEVTEMARSVRGEVISSTFDEPATRHVQVAEMVIEKAKRLVEHKRDVVILLDSITRLARAYNTVVPSSGKVLTGGVDANALQRPKRFFGAARNVEEGGSLTILATALVDTGSRMDDVIYEEFKGTGNMEIHMDRRIAEKRIFPAININRSGTRREELLMGQAELQKMWILRKILHPMDELAAMEFLHDKLKATKTNDEFFSSMKG</sequence>
<reference key="1">
    <citation type="journal article" date="1994" name="J. Bacteriol.">
        <title>Phylogenetic analysis of sequences from diverse bacteria with homology to the Escherichia coli rho gene.</title>
        <authorList>
            <person name="Opperman T."/>
            <person name="Richardson J.P."/>
        </authorList>
    </citation>
    <scope>NUCLEOTIDE SEQUENCE [GENOMIC DNA]</scope>
</reference>
<reference key="2">
    <citation type="journal article" date="2011" name="Stand. Genomic Sci.">
        <title>Complete genome sequence of Allochromatium vinosum DSM 180(T).</title>
        <authorList>
            <person name="Weissgerber T."/>
            <person name="Zigann R."/>
            <person name="Bruce D."/>
            <person name="Chang Y.J."/>
            <person name="Detter J.C."/>
            <person name="Han C."/>
            <person name="Hauser L."/>
            <person name="Jeffries C.D."/>
            <person name="Land M."/>
            <person name="Munk A.C."/>
            <person name="Tapia R."/>
            <person name="Dahl C."/>
        </authorList>
    </citation>
    <scope>NUCLEOTIDE SEQUENCE [LARGE SCALE GENOMIC DNA]</scope>
    <source>
        <strain>ATCC 17899 / DSM 180 / NBRC 103801 / NCIMB 10441 / D</strain>
    </source>
</reference>
<proteinExistence type="inferred from homology"/>
<organism>
    <name type="scientific">Allochromatium vinosum (strain ATCC 17899 / DSM 180 / NBRC 103801 / NCIMB 10441 / D)</name>
    <name type="common">Chromatium vinosum</name>
    <dbReference type="NCBI Taxonomy" id="572477"/>
    <lineage>
        <taxon>Bacteria</taxon>
        <taxon>Pseudomonadati</taxon>
        <taxon>Pseudomonadota</taxon>
        <taxon>Gammaproteobacteria</taxon>
        <taxon>Chromatiales</taxon>
        <taxon>Chromatiaceae</taxon>
        <taxon>Allochromatium</taxon>
    </lineage>
</organism>
<keyword id="KW-0067">ATP-binding</keyword>
<keyword id="KW-0347">Helicase</keyword>
<keyword id="KW-0378">Hydrolase</keyword>
<keyword id="KW-0547">Nucleotide-binding</keyword>
<keyword id="KW-1185">Reference proteome</keyword>
<keyword id="KW-0694">RNA-binding</keyword>
<keyword id="KW-0804">Transcription</keyword>
<keyword id="KW-0805">Transcription regulation</keyword>
<keyword id="KW-0806">Transcription termination</keyword>
<evidence type="ECO:0000255" key="1">
    <source>
        <dbReference type="HAMAP-Rule" id="MF_01884"/>
    </source>
</evidence>
<evidence type="ECO:0000255" key="2">
    <source>
        <dbReference type="PROSITE-ProRule" id="PRU01203"/>
    </source>
</evidence>
<evidence type="ECO:0000305" key="3"/>
<dbReference type="EC" id="3.6.4.-" evidence="1"/>
<dbReference type="EMBL" id="L27275">
    <property type="protein sequence ID" value="AAA59207.1"/>
    <property type="molecule type" value="Genomic_DNA"/>
</dbReference>
<dbReference type="EMBL" id="CP001896">
    <property type="protein sequence ID" value="ADC61554.1"/>
    <property type="molecule type" value="Genomic_DNA"/>
</dbReference>
<dbReference type="RefSeq" id="WP_012969830.1">
    <property type="nucleotide sequence ID" value="NC_013851.1"/>
</dbReference>
<dbReference type="SMR" id="P52152"/>
<dbReference type="STRING" id="572477.Alvin_0604"/>
<dbReference type="KEGG" id="alv:Alvin_0604"/>
<dbReference type="eggNOG" id="COG1158">
    <property type="taxonomic scope" value="Bacteria"/>
</dbReference>
<dbReference type="HOGENOM" id="CLU_016377_4_3_6"/>
<dbReference type="OrthoDB" id="9805197at2"/>
<dbReference type="Proteomes" id="UP000001441">
    <property type="component" value="Chromosome"/>
</dbReference>
<dbReference type="GO" id="GO:0005829">
    <property type="term" value="C:cytosol"/>
    <property type="evidence" value="ECO:0007669"/>
    <property type="project" value="UniProtKB-ARBA"/>
</dbReference>
<dbReference type="GO" id="GO:0005524">
    <property type="term" value="F:ATP binding"/>
    <property type="evidence" value="ECO:0007669"/>
    <property type="project" value="UniProtKB-UniRule"/>
</dbReference>
<dbReference type="GO" id="GO:0016887">
    <property type="term" value="F:ATP hydrolysis activity"/>
    <property type="evidence" value="ECO:0007669"/>
    <property type="project" value="InterPro"/>
</dbReference>
<dbReference type="GO" id="GO:0008186">
    <property type="term" value="F:ATP-dependent activity, acting on RNA"/>
    <property type="evidence" value="ECO:0007669"/>
    <property type="project" value="InterPro"/>
</dbReference>
<dbReference type="GO" id="GO:0004386">
    <property type="term" value="F:helicase activity"/>
    <property type="evidence" value="ECO:0007669"/>
    <property type="project" value="UniProtKB-UniRule"/>
</dbReference>
<dbReference type="GO" id="GO:0003723">
    <property type="term" value="F:RNA binding"/>
    <property type="evidence" value="ECO:0007669"/>
    <property type="project" value="UniProtKB-UniRule"/>
</dbReference>
<dbReference type="GO" id="GO:0006353">
    <property type="term" value="P:DNA-templated transcription termination"/>
    <property type="evidence" value="ECO:0007669"/>
    <property type="project" value="UniProtKB-UniRule"/>
</dbReference>
<dbReference type="CDD" id="cd04459">
    <property type="entry name" value="Rho_CSD"/>
    <property type="match status" value="1"/>
</dbReference>
<dbReference type="CDD" id="cd01128">
    <property type="entry name" value="rho_factor_C"/>
    <property type="match status" value="1"/>
</dbReference>
<dbReference type="FunFam" id="2.40.50.140:FF:000010">
    <property type="entry name" value="Transcription termination factor Rho"/>
    <property type="match status" value="1"/>
</dbReference>
<dbReference type="FunFam" id="3.40.50.300:FF:000072">
    <property type="entry name" value="Transcription termination factor Rho"/>
    <property type="match status" value="1"/>
</dbReference>
<dbReference type="Gene3D" id="1.10.720.10">
    <property type="match status" value="1"/>
</dbReference>
<dbReference type="Gene3D" id="2.40.50.140">
    <property type="entry name" value="Nucleic acid-binding proteins"/>
    <property type="match status" value="1"/>
</dbReference>
<dbReference type="Gene3D" id="3.40.50.300">
    <property type="entry name" value="P-loop containing nucleotide triphosphate hydrolases"/>
    <property type="match status" value="1"/>
</dbReference>
<dbReference type="HAMAP" id="MF_01884">
    <property type="entry name" value="Rho"/>
    <property type="match status" value="1"/>
</dbReference>
<dbReference type="InterPro" id="IPR003593">
    <property type="entry name" value="AAA+_ATPase"/>
</dbReference>
<dbReference type="InterPro" id="IPR000194">
    <property type="entry name" value="ATPase_F1/V1/A1_a/bsu_nucl-bd"/>
</dbReference>
<dbReference type="InterPro" id="IPR011129">
    <property type="entry name" value="CSD"/>
</dbReference>
<dbReference type="InterPro" id="IPR012340">
    <property type="entry name" value="NA-bd_OB-fold"/>
</dbReference>
<dbReference type="InterPro" id="IPR027417">
    <property type="entry name" value="P-loop_NTPase"/>
</dbReference>
<dbReference type="InterPro" id="IPR011112">
    <property type="entry name" value="Rho-like_N"/>
</dbReference>
<dbReference type="InterPro" id="IPR041703">
    <property type="entry name" value="Rho_factor_ATP-bd"/>
</dbReference>
<dbReference type="InterPro" id="IPR036269">
    <property type="entry name" value="Rho_N_sf"/>
</dbReference>
<dbReference type="InterPro" id="IPR011113">
    <property type="entry name" value="Rho_RNA-bd"/>
</dbReference>
<dbReference type="InterPro" id="IPR004665">
    <property type="entry name" value="Term_rho"/>
</dbReference>
<dbReference type="NCBIfam" id="NF006886">
    <property type="entry name" value="PRK09376.1"/>
    <property type="match status" value="1"/>
</dbReference>
<dbReference type="NCBIfam" id="TIGR00767">
    <property type="entry name" value="rho"/>
    <property type="match status" value="1"/>
</dbReference>
<dbReference type="PANTHER" id="PTHR46425">
    <property type="entry name" value="TRANSCRIPTION TERMINATION FACTOR RHO"/>
    <property type="match status" value="1"/>
</dbReference>
<dbReference type="PANTHER" id="PTHR46425:SF1">
    <property type="entry name" value="TRANSCRIPTION TERMINATION FACTOR RHO"/>
    <property type="match status" value="1"/>
</dbReference>
<dbReference type="Pfam" id="PF00006">
    <property type="entry name" value="ATP-synt_ab"/>
    <property type="match status" value="1"/>
</dbReference>
<dbReference type="Pfam" id="PF07498">
    <property type="entry name" value="Rho_N"/>
    <property type="match status" value="1"/>
</dbReference>
<dbReference type="Pfam" id="PF07497">
    <property type="entry name" value="Rho_RNA_bind"/>
    <property type="match status" value="1"/>
</dbReference>
<dbReference type="SMART" id="SM00382">
    <property type="entry name" value="AAA"/>
    <property type="match status" value="1"/>
</dbReference>
<dbReference type="SMART" id="SM00357">
    <property type="entry name" value="CSP"/>
    <property type="match status" value="1"/>
</dbReference>
<dbReference type="SMART" id="SM00959">
    <property type="entry name" value="Rho_N"/>
    <property type="match status" value="1"/>
</dbReference>
<dbReference type="SUPFAM" id="SSF50249">
    <property type="entry name" value="Nucleic acid-binding proteins"/>
    <property type="match status" value="1"/>
</dbReference>
<dbReference type="SUPFAM" id="SSF52540">
    <property type="entry name" value="P-loop containing nucleoside triphosphate hydrolases"/>
    <property type="match status" value="1"/>
</dbReference>
<dbReference type="SUPFAM" id="SSF68912">
    <property type="entry name" value="Rho N-terminal domain-like"/>
    <property type="match status" value="1"/>
</dbReference>
<dbReference type="PROSITE" id="PS51856">
    <property type="entry name" value="RHO_RNA_BD"/>
    <property type="match status" value="1"/>
</dbReference>
<name>RHO_ALLVD</name>
<accession>P52152</accession>
<accession>D3RPH2</accession>
<feature type="chain" id="PRO_0000188960" description="Transcription termination factor Rho">
    <location>
        <begin position="1"/>
        <end position="418"/>
    </location>
</feature>
<feature type="domain" description="Rho RNA-BD" evidence="2">
    <location>
        <begin position="48"/>
        <end position="123"/>
    </location>
</feature>
<feature type="binding site" evidence="1">
    <location>
        <begin position="169"/>
        <end position="174"/>
    </location>
    <ligand>
        <name>ATP</name>
        <dbReference type="ChEBI" id="CHEBI:30616"/>
    </ligand>
</feature>
<feature type="binding site" evidence="1">
    <location>
        <begin position="181"/>
        <end position="186"/>
    </location>
    <ligand>
        <name>ATP</name>
        <dbReference type="ChEBI" id="CHEBI:30616"/>
    </ligand>
</feature>
<feature type="binding site" evidence="1">
    <location>
        <position position="212"/>
    </location>
    <ligand>
        <name>ATP</name>
        <dbReference type="ChEBI" id="CHEBI:30616"/>
    </ligand>
</feature>
<feature type="sequence conflict" description="In Ref. 1; AAA59207." evidence="3" ref="1">
    <original>E</original>
    <variation>EK</variation>
    <location>
        <position position="56"/>
    </location>
</feature>
<feature type="sequence conflict" description="In Ref. 1; AAA59207." evidence="3" ref="1">
    <original>S</original>
    <variation>L</variation>
    <location>
        <position position="280"/>
    </location>
</feature>
<feature type="sequence conflict" description="In Ref. 1; AAA59207." evidence="3" ref="1">
    <original>LHDKLKATKTNDEFFSSMKG</original>
    <variation>DIKLIDTVDQHRIGGFQNLFFERVIGHMDDAIAH</variation>
    <location>
        <begin position="399"/>
        <end position="418"/>
    </location>
</feature>